<organism>
    <name type="scientific">Cereibacter sphaeroides (strain ATCC 17023 / DSM 158 / JCM 6121 / CCUG 31486 / LMG 2827 / NBRC 12203 / NCIMB 8253 / ATH 2.4.1.)</name>
    <name type="common">Rhodobacter sphaeroides</name>
    <dbReference type="NCBI Taxonomy" id="272943"/>
    <lineage>
        <taxon>Bacteria</taxon>
        <taxon>Pseudomonadati</taxon>
        <taxon>Pseudomonadota</taxon>
        <taxon>Alphaproteobacteria</taxon>
        <taxon>Rhodobacterales</taxon>
        <taxon>Paracoccaceae</taxon>
        <taxon>Cereibacter</taxon>
    </lineage>
</organism>
<dbReference type="EMBL" id="CP000143">
    <property type="protein sequence ID" value="ABA79251.2"/>
    <property type="molecule type" value="Genomic_DNA"/>
</dbReference>
<dbReference type="RefSeq" id="WP_017140236.1">
    <property type="nucleotide sequence ID" value="NC_007493.2"/>
</dbReference>
<dbReference type="RefSeq" id="YP_353152.2">
    <property type="nucleotide sequence ID" value="NC_007493.2"/>
</dbReference>
<dbReference type="SMR" id="Q3J1T3"/>
<dbReference type="STRING" id="272943.RSP_0076"/>
<dbReference type="EnsemblBacteria" id="ABA79251">
    <property type="protein sequence ID" value="ABA79251"/>
    <property type="gene ID" value="RSP_0076"/>
</dbReference>
<dbReference type="GeneID" id="3719945"/>
<dbReference type="KEGG" id="rsp:RSP_0076"/>
<dbReference type="PATRIC" id="fig|272943.9.peg.2016"/>
<dbReference type="eggNOG" id="COG1706">
    <property type="taxonomic scope" value="Bacteria"/>
</dbReference>
<dbReference type="OrthoDB" id="9786431at2"/>
<dbReference type="Proteomes" id="UP000002703">
    <property type="component" value="Chromosome 1"/>
</dbReference>
<dbReference type="GO" id="GO:0009428">
    <property type="term" value="C:bacterial-type flagellum basal body, distal rod, P ring"/>
    <property type="evidence" value="ECO:0007669"/>
    <property type="project" value="InterPro"/>
</dbReference>
<dbReference type="GO" id="GO:0030288">
    <property type="term" value="C:outer membrane-bounded periplasmic space"/>
    <property type="evidence" value="ECO:0007669"/>
    <property type="project" value="InterPro"/>
</dbReference>
<dbReference type="GO" id="GO:0005198">
    <property type="term" value="F:structural molecule activity"/>
    <property type="evidence" value="ECO:0007669"/>
    <property type="project" value="InterPro"/>
</dbReference>
<dbReference type="GO" id="GO:0071973">
    <property type="term" value="P:bacterial-type flagellum-dependent cell motility"/>
    <property type="evidence" value="ECO:0007669"/>
    <property type="project" value="InterPro"/>
</dbReference>
<dbReference type="HAMAP" id="MF_00416">
    <property type="entry name" value="FlgI"/>
    <property type="match status" value="1"/>
</dbReference>
<dbReference type="InterPro" id="IPR001782">
    <property type="entry name" value="Flag_FlgI"/>
</dbReference>
<dbReference type="NCBIfam" id="NF003676">
    <property type="entry name" value="PRK05303.1"/>
    <property type="match status" value="1"/>
</dbReference>
<dbReference type="PANTHER" id="PTHR30381">
    <property type="entry name" value="FLAGELLAR P-RING PERIPLASMIC PROTEIN FLGI"/>
    <property type="match status" value="1"/>
</dbReference>
<dbReference type="PANTHER" id="PTHR30381:SF0">
    <property type="entry name" value="FLAGELLAR P-RING PROTEIN"/>
    <property type="match status" value="1"/>
</dbReference>
<dbReference type="Pfam" id="PF02119">
    <property type="entry name" value="FlgI"/>
    <property type="match status" value="1"/>
</dbReference>
<dbReference type="PRINTS" id="PR01010">
    <property type="entry name" value="FLGPRINGFLGI"/>
</dbReference>
<feature type="signal peptide" evidence="1">
    <location>
        <begin position="1"/>
        <end position="19"/>
    </location>
</feature>
<feature type="chain" id="PRO_0000236315" description="Flagellar P-ring protein 1">
    <location>
        <begin position="20"/>
        <end position="371"/>
    </location>
</feature>
<evidence type="ECO:0000255" key="1">
    <source>
        <dbReference type="HAMAP-Rule" id="MF_00416"/>
    </source>
</evidence>
<protein>
    <recommendedName>
        <fullName evidence="1">Flagellar P-ring protein 1</fullName>
    </recommendedName>
    <alternativeName>
        <fullName evidence="1">Basal body P-ring protein 1</fullName>
    </alternativeName>
</protein>
<sequence length="371" mass="37876">MRRALLLAALLACAPPAFADRLKDLTTVAGVRSNPLVGYGVVVGLSGTGDGNSQLTQQSMQSLISRLGLSVETGDLKAKNAAAVMVTADLPPFLKIGQTLDVTVSTVGQAKSLKGGTLLMTPLMGADGEVYAIAQGNLVVGGLGVEGKDGSSLTVNIPTVGRVPRGGMVEKMVETPFLETDHLVLNLNRGDFSTAAAVAEGVNRTFGPDVAVALDGTSIRVRAPADPARRVSFMSLLENVEVDPAPPVARVVVNARTGTVVIGGTVKVTPAAVTHGSLTVRVTEDQRVSQGASVVVGNNATVVAPGEPVVTPDSQVQVVEEPAKAFVFDPGVSLSSLVDAINAVGASPSDLVAILEALREAGALRAELVVI</sequence>
<comment type="function">
    <text evidence="1">Assembles around the rod to form the L-ring and probably protects the motor/basal body from shearing forces during rotation.</text>
</comment>
<comment type="subunit">
    <text evidence="1">The basal body constitutes a major portion of the flagellar organelle and consists of four rings (L,P,S, and M) mounted on a central rod.</text>
</comment>
<comment type="subcellular location">
    <subcellularLocation>
        <location evidence="1">Periplasm</location>
    </subcellularLocation>
    <subcellularLocation>
        <location evidence="1">Bacterial flagellum basal body</location>
    </subcellularLocation>
</comment>
<comment type="similarity">
    <text evidence="1">Belongs to the FlgI family.</text>
</comment>
<accession>Q3J1T3</accession>
<gene>
    <name evidence="1" type="primary">flgI1</name>
    <name type="ordered locus">RHOS4_16830</name>
    <name type="ORF">RSP_0076</name>
</gene>
<name>FLGI1_CERS4</name>
<reference key="1">
    <citation type="submission" date="2005-09" db="EMBL/GenBank/DDBJ databases">
        <title>Complete sequence of chromosome 1 of Rhodobacter sphaeroides 2.4.1.</title>
        <authorList>
            <person name="Copeland A."/>
            <person name="Lucas S."/>
            <person name="Lapidus A."/>
            <person name="Barry K."/>
            <person name="Detter J.C."/>
            <person name="Glavina T."/>
            <person name="Hammon N."/>
            <person name="Israni S."/>
            <person name="Pitluck S."/>
            <person name="Richardson P."/>
            <person name="Mackenzie C."/>
            <person name="Choudhary M."/>
            <person name="Larimer F."/>
            <person name="Hauser L.J."/>
            <person name="Land M."/>
            <person name="Donohue T.J."/>
            <person name="Kaplan S."/>
        </authorList>
    </citation>
    <scope>NUCLEOTIDE SEQUENCE [LARGE SCALE GENOMIC DNA]</scope>
    <source>
        <strain>ATCC 17023 / DSM 158 / JCM 6121 / CCUG 31486 / LMG 2827 / NBRC 12203 / NCIMB 8253 / ATH 2.4.1.</strain>
    </source>
</reference>
<proteinExistence type="inferred from homology"/>
<keyword id="KW-0975">Bacterial flagellum</keyword>
<keyword id="KW-0574">Periplasm</keyword>
<keyword id="KW-1185">Reference proteome</keyword>
<keyword id="KW-0732">Signal</keyword>